<dbReference type="EMBL" id="AABR07021932">
    <property type="status" value="NOT_ANNOTATED_CDS"/>
    <property type="molecule type" value="Genomic_DNA"/>
</dbReference>
<dbReference type="SMR" id="F1LTR1"/>
<dbReference type="CORUM" id="F1LTR1"/>
<dbReference type="FunCoup" id="F1LTR1">
    <property type="interactions" value="2244"/>
</dbReference>
<dbReference type="STRING" id="10116.ENSRNOP00000005059"/>
<dbReference type="PhosphoSitePlus" id="F1LTR1"/>
<dbReference type="jPOST" id="F1LTR1"/>
<dbReference type="PaxDb" id="10116-ENSRNOP00000005059"/>
<dbReference type="AGR" id="RGD:1565589"/>
<dbReference type="RGD" id="1565589">
    <property type="gene designation" value="Wdr26"/>
</dbReference>
<dbReference type="VEuPathDB" id="HostDB:ENSRNOG00000003723"/>
<dbReference type="eggNOG" id="KOG0293">
    <property type="taxonomic scope" value="Eukaryota"/>
</dbReference>
<dbReference type="HOGENOM" id="CLU_000288_57_25_1"/>
<dbReference type="InParanoid" id="F1LTR1"/>
<dbReference type="TreeFam" id="TF314869"/>
<dbReference type="Reactome" id="R-RNO-9861718">
    <property type="pathway name" value="Regulation of pyruvate metabolism"/>
</dbReference>
<dbReference type="PRO" id="PR:F1LTR1"/>
<dbReference type="Proteomes" id="UP000002494">
    <property type="component" value="Chromosome 13"/>
</dbReference>
<dbReference type="Bgee" id="ENSRNOG00000003723">
    <property type="expression patterns" value="Expressed in esophagus and 19 other cell types or tissues"/>
</dbReference>
<dbReference type="GO" id="GO:0005737">
    <property type="term" value="C:cytoplasm"/>
    <property type="evidence" value="ECO:0000266"/>
    <property type="project" value="RGD"/>
</dbReference>
<dbReference type="GO" id="GO:0034657">
    <property type="term" value="C:GID complex"/>
    <property type="evidence" value="ECO:0000318"/>
    <property type="project" value="GO_Central"/>
</dbReference>
<dbReference type="GO" id="GO:0005739">
    <property type="term" value="C:mitochondrion"/>
    <property type="evidence" value="ECO:0007669"/>
    <property type="project" value="UniProtKB-SubCell"/>
</dbReference>
<dbReference type="GO" id="GO:0005634">
    <property type="term" value="C:nucleus"/>
    <property type="evidence" value="ECO:0000266"/>
    <property type="project" value="RGD"/>
</dbReference>
<dbReference type="GO" id="GO:0000151">
    <property type="term" value="C:ubiquitin ligase complex"/>
    <property type="evidence" value="ECO:0000266"/>
    <property type="project" value="RGD"/>
</dbReference>
<dbReference type="GO" id="GO:0043161">
    <property type="term" value="P:proteasome-mediated ubiquitin-dependent protein catabolic process"/>
    <property type="evidence" value="ECO:0000318"/>
    <property type="project" value="GO_Central"/>
</dbReference>
<dbReference type="CDD" id="cd00200">
    <property type="entry name" value="WD40"/>
    <property type="match status" value="1"/>
</dbReference>
<dbReference type="FunFam" id="2.130.10.10:FF:000087">
    <property type="entry name" value="WD repeat-containing protein 26 homolog"/>
    <property type="match status" value="1"/>
</dbReference>
<dbReference type="Gene3D" id="2.130.10.10">
    <property type="entry name" value="YVTN repeat-like/Quinoprotein amine dehydrogenase"/>
    <property type="match status" value="1"/>
</dbReference>
<dbReference type="InterPro" id="IPR006595">
    <property type="entry name" value="CTLH_C"/>
</dbReference>
<dbReference type="InterPro" id="IPR020472">
    <property type="entry name" value="G-protein_beta_WD-40_rep"/>
</dbReference>
<dbReference type="InterPro" id="IPR015943">
    <property type="entry name" value="WD40/YVTN_repeat-like_dom_sf"/>
</dbReference>
<dbReference type="InterPro" id="IPR036322">
    <property type="entry name" value="WD40_repeat_dom_sf"/>
</dbReference>
<dbReference type="InterPro" id="IPR001680">
    <property type="entry name" value="WD40_rpt"/>
</dbReference>
<dbReference type="InterPro" id="IPR051350">
    <property type="entry name" value="WD_repeat-ST_regulator"/>
</dbReference>
<dbReference type="PANTHER" id="PTHR22838">
    <property type="entry name" value="WD REPEAT PROTEIN 26-RELATED"/>
    <property type="match status" value="1"/>
</dbReference>
<dbReference type="PANTHER" id="PTHR22838:SF0">
    <property type="entry name" value="WD REPEAT-CONTAINING PROTEIN 26"/>
    <property type="match status" value="1"/>
</dbReference>
<dbReference type="Pfam" id="PF00400">
    <property type="entry name" value="WD40"/>
    <property type="match status" value="5"/>
</dbReference>
<dbReference type="PRINTS" id="PR00320">
    <property type="entry name" value="GPROTEINBRPT"/>
</dbReference>
<dbReference type="SMART" id="SM00668">
    <property type="entry name" value="CTLH"/>
    <property type="match status" value="1"/>
</dbReference>
<dbReference type="SMART" id="SM00320">
    <property type="entry name" value="WD40"/>
    <property type="match status" value="5"/>
</dbReference>
<dbReference type="SUPFAM" id="SSF50978">
    <property type="entry name" value="WD40 repeat-like"/>
    <property type="match status" value="1"/>
</dbReference>
<dbReference type="PROSITE" id="PS50897">
    <property type="entry name" value="CTLH"/>
    <property type="match status" value="1"/>
</dbReference>
<dbReference type="PROSITE" id="PS50082">
    <property type="entry name" value="WD_REPEATS_2"/>
    <property type="match status" value="3"/>
</dbReference>
<dbReference type="PROSITE" id="PS50294">
    <property type="entry name" value="WD_REPEATS_REGION"/>
    <property type="match status" value="1"/>
</dbReference>
<gene>
    <name type="primary">Wdr26</name>
</gene>
<evidence type="ECO:0000250" key="1">
    <source>
        <dbReference type="UniProtKB" id="Q9H7D7"/>
    </source>
</evidence>
<evidence type="ECO:0000255" key="2"/>
<evidence type="ECO:0000255" key="3">
    <source>
        <dbReference type="PROSITE-ProRule" id="PRU00058"/>
    </source>
</evidence>
<evidence type="ECO:0000269" key="4">
    <source>
    </source>
</evidence>
<evidence type="ECO:0000269" key="5">
    <source>
    </source>
</evidence>
<reference key="1">
    <citation type="journal article" date="2004" name="Nature">
        <title>Genome sequence of the Brown Norway rat yields insights into mammalian evolution.</title>
        <authorList>
            <person name="Gibbs R.A."/>
            <person name="Weinstock G.M."/>
            <person name="Metzker M.L."/>
            <person name="Muzny D.M."/>
            <person name="Sodergren E.J."/>
            <person name="Scherer S."/>
            <person name="Scott G."/>
            <person name="Steffen D."/>
            <person name="Worley K.C."/>
            <person name="Burch P.E."/>
            <person name="Okwuonu G."/>
            <person name="Hines S."/>
            <person name="Lewis L."/>
            <person name="Deramo C."/>
            <person name="Delgado O."/>
            <person name="Dugan-Rocha S."/>
            <person name="Miner G."/>
            <person name="Morgan M."/>
            <person name="Hawes A."/>
            <person name="Gill R."/>
            <person name="Holt R.A."/>
            <person name="Adams M.D."/>
            <person name="Amanatides P.G."/>
            <person name="Baden-Tillson H."/>
            <person name="Barnstead M."/>
            <person name="Chin S."/>
            <person name="Evans C.A."/>
            <person name="Ferriera S."/>
            <person name="Fosler C."/>
            <person name="Glodek A."/>
            <person name="Gu Z."/>
            <person name="Jennings D."/>
            <person name="Kraft C.L."/>
            <person name="Nguyen T."/>
            <person name="Pfannkoch C.M."/>
            <person name="Sitter C."/>
            <person name="Sutton G.G."/>
            <person name="Venter J.C."/>
            <person name="Woodage T."/>
            <person name="Smith D."/>
            <person name="Lee H.-M."/>
            <person name="Gustafson E."/>
            <person name="Cahill P."/>
            <person name="Kana A."/>
            <person name="Doucette-Stamm L."/>
            <person name="Weinstock K."/>
            <person name="Fechtel K."/>
            <person name="Weiss R.B."/>
            <person name="Dunn D.M."/>
            <person name="Green E.D."/>
            <person name="Blakesley R.W."/>
            <person name="Bouffard G.G."/>
            <person name="De Jong P.J."/>
            <person name="Osoegawa K."/>
            <person name="Zhu B."/>
            <person name="Marra M."/>
            <person name="Schein J."/>
            <person name="Bosdet I."/>
            <person name="Fjell C."/>
            <person name="Jones S."/>
            <person name="Krzywinski M."/>
            <person name="Mathewson C."/>
            <person name="Siddiqui A."/>
            <person name="Wye N."/>
            <person name="McPherson J."/>
            <person name="Zhao S."/>
            <person name="Fraser C.M."/>
            <person name="Shetty J."/>
            <person name="Shatsman S."/>
            <person name="Geer K."/>
            <person name="Chen Y."/>
            <person name="Abramzon S."/>
            <person name="Nierman W.C."/>
            <person name="Havlak P.H."/>
            <person name="Chen R."/>
            <person name="Durbin K.J."/>
            <person name="Egan A."/>
            <person name="Ren Y."/>
            <person name="Song X.-Z."/>
            <person name="Li B."/>
            <person name="Liu Y."/>
            <person name="Qin X."/>
            <person name="Cawley S."/>
            <person name="Cooney A.J."/>
            <person name="D'Souza L.M."/>
            <person name="Martin K."/>
            <person name="Wu J.Q."/>
            <person name="Gonzalez-Garay M.L."/>
            <person name="Jackson A.R."/>
            <person name="Kalafus K.J."/>
            <person name="McLeod M.P."/>
            <person name="Milosavljevic A."/>
            <person name="Virk D."/>
            <person name="Volkov A."/>
            <person name="Wheeler D.A."/>
            <person name="Zhang Z."/>
            <person name="Bailey J.A."/>
            <person name="Eichler E.E."/>
            <person name="Tuzun E."/>
            <person name="Birney E."/>
            <person name="Mongin E."/>
            <person name="Ureta-Vidal A."/>
            <person name="Woodwark C."/>
            <person name="Zdobnov E."/>
            <person name="Bork P."/>
            <person name="Suyama M."/>
            <person name="Torrents D."/>
            <person name="Alexandersson M."/>
            <person name="Trask B.J."/>
            <person name="Young J.M."/>
            <person name="Huang H."/>
            <person name="Wang H."/>
            <person name="Xing H."/>
            <person name="Daniels S."/>
            <person name="Gietzen D."/>
            <person name="Schmidt J."/>
            <person name="Stevens K."/>
            <person name="Vitt U."/>
            <person name="Wingrove J."/>
            <person name="Camara F."/>
            <person name="Mar Alba M."/>
            <person name="Abril J.F."/>
            <person name="Guigo R."/>
            <person name="Smit A."/>
            <person name="Dubchak I."/>
            <person name="Rubin E.M."/>
            <person name="Couronne O."/>
            <person name="Poliakov A."/>
            <person name="Huebner N."/>
            <person name="Ganten D."/>
            <person name="Goesele C."/>
            <person name="Hummel O."/>
            <person name="Kreitler T."/>
            <person name="Lee Y.-A."/>
            <person name="Monti J."/>
            <person name="Schulz H."/>
            <person name="Zimdahl H."/>
            <person name="Himmelbauer H."/>
            <person name="Lehrach H."/>
            <person name="Jacob H.J."/>
            <person name="Bromberg S."/>
            <person name="Gullings-Handley J."/>
            <person name="Jensen-Seaman M.I."/>
            <person name="Kwitek A.E."/>
            <person name="Lazar J."/>
            <person name="Pasko D."/>
            <person name="Tonellato P.J."/>
            <person name="Twigger S."/>
            <person name="Ponting C.P."/>
            <person name="Duarte J.M."/>
            <person name="Rice S."/>
            <person name="Goodstadt L."/>
            <person name="Beatson S.A."/>
            <person name="Emes R.D."/>
            <person name="Winter E.E."/>
            <person name="Webber C."/>
            <person name="Brandt P."/>
            <person name="Nyakatura G."/>
            <person name="Adetobi M."/>
            <person name="Chiaromonte F."/>
            <person name="Elnitski L."/>
            <person name="Eswara P."/>
            <person name="Hardison R.C."/>
            <person name="Hou M."/>
            <person name="Kolbe D."/>
            <person name="Makova K."/>
            <person name="Miller W."/>
            <person name="Nekrutenko A."/>
            <person name="Riemer C."/>
            <person name="Schwartz S."/>
            <person name="Taylor J."/>
            <person name="Yang S."/>
            <person name="Zhang Y."/>
            <person name="Lindpaintner K."/>
            <person name="Andrews T.D."/>
            <person name="Caccamo M."/>
            <person name="Clamp M."/>
            <person name="Clarke L."/>
            <person name="Curwen V."/>
            <person name="Durbin R.M."/>
            <person name="Eyras E."/>
            <person name="Searle S.M."/>
            <person name="Cooper G.M."/>
            <person name="Batzoglou S."/>
            <person name="Brudno M."/>
            <person name="Sidow A."/>
            <person name="Stone E.A."/>
            <person name="Payseur B.A."/>
            <person name="Bourque G."/>
            <person name="Lopez-Otin C."/>
            <person name="Puente X.S."/>
            <person name="Chakrabarti K."/>
            <person name="Chatterji S."/>
            <person name="Dewey C."/>
            <person name="Pachter L."/>
            <person name="Bray N."/>
            <person name="Yap V.B."/>
            <person name="Caspi A."/>
            <person name="Tesler G."/>
            <person name="Pevzner P.A."/>
            <person name="Haussler D."/>
            <person name="Roskin K.M."/>
            <person name="Baertsch R."/>
            <person name="Clawson H."/>
            <person name="Furey T.S."/>
            <person name="Hinrichs A.S."/>
            <person name="Karolchik D."/>
            <person name="Kent W.J."/>
            <person name="Rosenbloom K.R."/>
            <person name="Trumbower H."/>
            <person name="Weirauch M."/>
            <person name="Cooper D.N."/>
            <person name="Stenson P.D."/>
            <person name="Ma B."/>
            <person name="Brent M."/>
            <person name="Arumugam M."/>
            <person name="Shteynberg D."/>
            <person name="Copley R.R."/>
            <person name="Taylor M.S."/>
            <person name="Riethman H."/>
            <person name="Mudunuri U."/>
            <person name="Peterson J."/>
            <person name="Guyer M."/>
            <person name="Felsenfeld A."/>
            <person name="Old S."/>
            <person name="Mockrin S."/>
            <person name="Collins F.S."/>
        </authorList>
    </citation>
    <scope>NUCLEOTIDE SEQUENCE [LARGE SCALE GENOMIC DNA]</scope>
    <source>
        <strain>Brown Norway</strain>
    </source>
</reference>
<reference key="2">
    <citation type="journal article" date="2012" name="Free Radic. Res.">
        <title>A novel WD-repeat protein, WDR26, inhibits apoptosis of cardiomyocytes induced by oxidative stress.</title>
        <authorList>
            <person name="Feng Y."/>
            <person name="Zhang C."/>
            <person name="Luo Q."/>
            <person name="Wei X."/>
            <person name="Jiang B."/>
            <person name="Zhu H."/>
            <person name="Zhang L."/>
            <person name="Jiang L."/>
            <person name="Liu M."/>
            <person name="Xiao X."/>
        </authorList>
    </citation>
    <scope>FUNCTION</scope>
    <scope>SUBCELLULAR LOCATION</scope>
</reference>
<reference key="3">
    <citation type="journal article" date="2016" name="Acta Biochim. Biophys. Sin.">
        <title>WDR26 promotes mitophagy of cardiomyocytes induced by hypoxia through Parkin translocation.</title>
        <authorList>
            <person name="Feng Y."/>
            <person name="Zhao J."/>
            <person name="Hou H."/>
            <person name="Zhang H."/>
            <person name="Jiao Y."/>
            <person name="Wang J."/>
            <person name="Wang Y."/>
            <person name="Sun Y."/>
        </authorList>
    </citation>
    <scope>FUNCTION</scope>
</reference>
<name>WDR26_RAT</name>
<protein>
    <recommendedName>
        <fullName evidence="1">WD repeat-containing protein 26</fullName>
    </recommendedName>
</protein>
<accession>F1LTR1</accession>
<keyword id="KW-0963">Cytoplasm</keyword>
<keyword id="KW-0496">Mitochondrion</keyword>
<keyword id="KW-0539">Nucleus</keyword>
<keyword id="KW-1185">Reference proteome</keyword>
<keyword id="KW-0677">Repeat</keyword>
<keyword id="KW-0853">WD repeat</keyword>
<sequence>MQKAGCRLEHPSATKFRNHVMEGDWDKAENDLNELKPLVHSPHAIVVRGALEISQTLLGIIVRMKFLLLQQKYLEYLEDGKVLEALQVLRCELTPLKYNTERIHVLSGYLMCSHAEDLRAKAEWEGKGAASRSKLLDKLQTYLPPSVMLPPRRLQTLLRQAVELQRDRCLYHNTKLDNNLDSVSLLIDHVCSRRQFPCYTQQILTEHCNEVWFCKFSNDGTKLATGSKDTTVIVWQVDADTHLLKLLKTLEGHAYGVSYIAWSPDDSYLVACGPDDCSELWLWNVQTGELRTKMSQSHEDSLTSVAWNPDGKRFVTGGQRGQFYQCDLDGNLLDSWEGVRVQCLWCLSDGKTVLASDTHQRIRGYNFEDLTDRNIVQEDHPIMSFTISKNGRLALLNVATQGVHLWDLQDRVLVRKYQGVTQGFYTIHSCFGGHNEDFIASGSEDHKVYIWHKRSELPIAELTGHTRTVNCVSWNPQIPSMMASASDDGTVRIWGPAPFIDHQNIEEECSSMDS</sequence>
<proteinExistence type="inferred from homology"/>
<feature type="chain" id="PRO_0000442421" description="WD repeat-containing protein 26">
    <location>
        <begin position="1"/>
        <end position="514"/>
    </location>
</feature>
<feature type="domain" description="CTLH" evidence="3">
    <location>
        <begin position="9"/>
        <end position="84"/>
    </location>
</feature>
<feature type="repeat" description="WD 1" evidence="2">
    <location>
        <begin position="206"/>
        <end position="245"/>
    </location>
</feature>
<feature type="repeat" description="WD 2" evidence="2">
    <location>
        <begin position="252"/>
        <end position="291"/>
    </location>
</feature>
<feature type="repeat" description="WD 3" evidence="2">
    <location>
        <begin position="297"/>
        <end position="337"/>
    </location>
</feature>
<feature type="repeat" description="WD 4" evidence="2">
    <location>
        <begin position="377"/>
        <end position="416"/>
    </location>
</feature>
<feature type="repeat" description="WD 5" evidence="2">
    <location>
        <begin position="419"/>
        <end position="461"/>
    </location>
</feature>
<feature type="repeat" description="WD 6" evidence="2">
    <location>
        <begin position="464"/>
        <end position="504"/>
    </location>
</feature>
<comment type="function">
    <text evidence="1 4 5">G-beta-like protein involved in cell signal transduction. Acts as a negative regulator in MAPK signaling pathway. Functions as a scaffolding protein to promote G beta:gamma-mediated PLCB2 plasma membrane translocation and subsequent activation in leukocytes. Core component of the CTLH E3 ubiquitin-protein ligase complex that selectively accepts ubiquitin from UBE2H and mediates ubiquitination and subsequent proteasomal degradation of the transcription factor HBP1 (By similarity). Acts as a negative regulator of the canonical Wnt signaling pathway through preventing ubiquitination of beta-catenin CTNNB1 by the beta-catenin destruction complex, thus negatively regulating CTNNB1 degradation (By similarity). Protects cells from oxidative stress-induced apoptosis via the down-regulation of AP-1 transcriptional activity as well as by inhibiting cytochrome c release from mitochondria (PubMed:22448652). Also protects cells by promoting hypoxia-mediated autophagy and mitophagy (PubMed:27797717).</text>
</comment>
<comment type="subunit">
    <text evidence="1">Forms homooligomers. Identified in the CTLH complex that contains GID4, RANBP9 and/or RANBP10, MKLN1, MAEA, RMND5A (or alternatively its paralog RMND5B), GID8, ARMC8, WDR26 and YPEL5. Within this complex, MAEA, RMND5A (or alternatively its paralog RMND5B), GID8, WDR26, and RANBP9 and/or RANBP10 form the catalytic core, while GID4, MKLN1, ARMC8 and YPEL5 have ancillary roles. Interacts with DDB1-CUL4A/B E3 ligase complexes. Forms a complex composed of at least WDR26, a G-beta:gamma unit, and PLCB2. Interacts with AXIN1.</text>
</comment>
<comment type="subcellular location">
    <subcellularLocation>
        <location evidence="1">Cytoplasm</location>
    </subcellularLocation>
    <subcellularLocation>
        <location evidence="1">Nucleus</location>
    </subcellularLocation>
    <subcellularLocation>
        <location evidence="4">Mitochondrion</location>
    </subcellularLocation>
</comment>
<organism>
    <name type="scientific">Rattus norvegicus</name>
    <name type="common">Rat</name>
    <dbReference type="NCBI Taxonomy" id="10116"/>
    <lineage>
        <taxon>Eukaryota</taxon>
        <taxon>Metazoa</taxon>
        <taxon>Chordata</taxon>
        <taxon>Craniata</taxon>
        <taxon>Vertebrata</taxon>
        <taxon>Euteleostomi</taxon>
        <taxon>Mammalia</taxon>
        <taxon>Eutheria</taxon>
        <taxon>Euarchontoglires</taxon>
        <taxon>Glires</taxon>
        <taxon>Rodentia</taxon>
        <taxon>Myomorpha</taxon>
        <taxon>Muroidea</taxon>
        <taxon>Muridae</taxon>
        <taxon>Murinae</taxon>
        <taxon>Rattus</taxon>
    </lineage>
</organism>